<accession>O07824</accession>
<reference key="1">
    <citation type="submission" date="1997-06" db="EMBL/GenBank/DDBJ databases">
        <title>Naphthalene dioxygenase genes from Pseudomonas fluorescens.</title>
        <authorList>
            <person name="Hamann C."/>
        </authorList>
    </citation>
    <scope>NUCLEOTIDE SEQUENCE [GENOMIC DNA]</scope>
    <source>
        <strain>ATCC 17483 / DSM 6506 / JCM 6159 / NCIMB 10529 / Stanier 109</strain>
    </source>
</reference>
<gene>
    <name evidence="1" type="primary">ndoB</name>
    <name type="synonym">ndoC2</name>
</gene>
<proteinExistence type="inferred from homology"/>
<comment type="function">
    <text evidence="1">Component of the naphthalene dioxygenase (NDO) multicomponent enzyme system which catalyzes the incorporation of both atoms of molecular oxygen into naphthalene to form cis-(1R,2S)-dihydroxy-1,2-dihydronaphthalene. The alpha subunit has a catalytic role in the holoenzyme.</text>
</comment>
<comment type="catalytic activity">
    <reaction evidence="1">
        <text>naphthalene + NADH + O2 + H(+) = (1R,2S)-1,2-dihydronaphthalene-1,2-diol + NAD(+)</text>
        <dbReference type="Rhea" id="RHEA:19173"/>
        <dbReference type="ChEBI" id="CHEBI:15378"/>
        <dbReference type="ChEBI" id="CHEBI:15379"/>
        <dbReference type="ChEBI" id="CHEBI:16482"/>
        <dbReference type="ChEBI" id="CHEBI:44343"/>
        <dbReference type="ChEBI" id="CHEBI:57540"/>
        <dbReference type="ChEBI" id="CHEBI:57945"/>
        <dbReference type="EC" id="1.14.12.12"/>
    </reaction>
</comment>
<comment type="cofactor">
    <cofactor evidence="1 2">
        <name>[2Fe-2S] cluster</name>
        <dbReference type="ChEBI" id="CHEBI:190135"/>
    </cofactor>
    <text evidence="1 2">Binds 1 [2Fe-2S] cluster per subunit.</text>
</comment>
<comment type="cofactor">
    <cofactor evidence="1">
        <name>Fe(2+)</name>
        <dbReference type="ChEBI" id="CHEBI:29033"/>
    </cofactor>
    <text evidence="1">Binds 1 Fe(2+) ion per subunit.</text>
</comment>
<comment type="pathway">
    <text evidence="1">Aromatic compound metabolism; naphthalene degradation.</text>
</comment>
<comment type="subunit">
    <text evidence="1">The naphthalene dioxygenase (NDO) multicomponent enzyme system is composed of an electron transfer component and a dioxygenase component (iron sulfur protein (ISP)). The electron transfer component is composed of a ferredoxin reductase (NdoR) and a ferredoxin (NdoA), and the dioxygenase component is formed of a heterohexamer (trimer of heterodimers) of three large alpha subunits (NdoB) and three small beta subunits (NdoC).</text>
</comment>
<comment type="similarity">
    <text evidence="3">Belongs to the bacterial ring-hydroxylating dioxygenase alpha subunit family.</text>
</comment>
<sequence length="449" mass="49514">MNYKNKILVSESGLTQKHLIHGDEELFQHELRTIXARNWLFLTHDSLIPSPGDYVTAKMGIDEVIVSRQSDGSIRAFLNVCRHRGKTLVNAEAGNAKGFVCSYHGWGFGSNGELQSVPFEKELYGESLNKKCLGLKEVARVESFHGFIYGCFDQEAPSLMDYLGDAAWYLEPIFKHSGGLELVGPPGKVVIKANWKAPAENFVGDAYHVGWTHASSLRTGESIFSSLAGNAVLPPEGAGLQMTSKYGSGMGVLWDGYSGVHSADLVPELMAFGGAKQERLNKEIGDVPARIYRSHLNCTVFPNNSVLTCSGVFKVWNPIDANTTEVWTYAIVEKDMPEDLKRRLADAVQRTFGPAGFWESDDNDNMETASQNGKKYQSRDSDLISNLGFGKDVYGDAVYPGVVGKSAIGETSYRGFYRAYQAHVSSSNWAEFEDASSTWHTELTKTTDR</sequence>
<protein>
    <recommendedName>
        <fullName evidence="1">Naphthalene 1,2-dioxygenase system, large oxygenase component</fullName>
        <ecNumber evidence="1">1.14.12.12</ecNumber>
    </recommendedName>
    <alternativeName>
        <fullName evidence="1">ISP NAP</fullName>
    </alternativeName>
    <alternativeName>
        <fullName evidence="1">Naphthalene 1,2-dioxygenase ISP alpha</fullName>
    </alternativeName>
    <alternativeName>
        <fullName evidence="1">Naphthalene 1,2-dioxygenase subunit alpha</fullName>
        <shortName evidence="1">ND subunit alpha</shortName>
        <shortName evidence="1">NDO subunit alpha</shortName>
    </alternativeName>
</protein>
<geneLocation type="plasmid"/>
<feature type="chain" id="PRO_0000085055" description="Naphthalene 1,2-dioxygenase system, large oxygenase component">
    <location>
        <begin position="1"/>
        <end position="449"/>
    </location>
</feature>
<feature type="domain" description="Rieske" evidence="2">
    <location>
        <begin position="39"/>
        <end position="137"/>
    </location>
</feature>
<feature type="binding site" evidence="1 2">
    <location>
        <position position="81"/>
    </location>
    <ligand>
        <name>[2Fe-2S] cluster</name>
        <dbReference type="ChEBI" id="CHEBI:190135"/>
    </ligand>
</feature>
<feature type="binding site" evidence="1 2">
    <location>
        <position position="83"/>
    </location>
    <ligand>
        <name>[2Fe-2S] cluster</name>
        <dbReference type="ChEBI" id="CHEBI:190135"/>
    </ligand>
</feature>
<feature type="binding site" evidence="1 2">
    <location>
        <position position="101"/>
    </location>
    <ligand>
        <name>[2Fe-2S] cluster</name>
        <dbReference type="ChEBI" id="CHEBI:190135"/>
    </ligand>
</feature>
<feature type="binding site" evidence="1 2">
    <location>
        <position position="104"/>
    </location>
    <ligand>
        <name>[2Fe-2S] cluster</name>
        <dbReference type="ChEBI" id="CHEBI:190135"/>
    </ligand>
</feature>
<feature type="binding site" evidence="1">
    <location>
        <position position="208"/>
    </location>
    <ligand>
        <name>Fe cation</name>
        <dbReference type="ChEBI" id="CHEBI:24875"/>
    </ligand>
</feature>
<feature type="binding site" evidence="1">
    <location>
        <position position="213"/>
    </location>
    <ligand>
        <name>Fe cation</name>
        <dbReference type="ChEBI" id="CHEBI:24875"/>
    </ligand>
</feature>
<feature type="binding site" evidence="1">
    <location>
        <position position="362"/>
    </location>
    <ligand>
        <name>Fe cation</name>
        <dbReference type="ChEBI" id="CHEBI:24875"/>
    </ligand>
</feature>
<evidence type="ECO:0000250" key="1">
    <source>
        <dbReference type="UniProtKB" id="P0A110"/>
    </source>
</evidence>
<evidence type="ECO:0000255" key="2">
    <source>
        <dbReference type="PROSITE-ProRule" id="PRU00628"/>
    </source>
</evidence>
<evidence type="ECO:0000305" key="3"/>
<name>NDOB_PSEFL</name>
<keyword id="KW-0001">2Fe-2S</keyword>
<keyword id="KW-0058">Aromatic hydrocarbons catabolism</keyword>
<keyword id="KW-0223">Dioxygenase</keyword>
<keyword id="KW-0408">Iron</keyword>
<keyword id="KW-0411">Iron-sulfur</keyword>
<keyword id="KW-0479">Metal-binding</keyword>
<keyword id="KW-0520">NAD</keyword>
<keyword id="KW-0560">Oxidoreductase</keyword>
<keyword id="KW-0614">Plasmid</keyword>
<organism>
    <name type="scientific">Pseudomonas fluorescens</name>
    <dbReference type="NCBI Taxonomy" id="294"/>
    <lineage>
        <taxon>Bacteria</taxon>
        <taxon>Pseudomonadati</taxon>
        <taxon>Pseudomonadota</taxon>
        <taxon>Gammaproteobacteria</taxon>
        <taxon>Pseudomonadales</taxon>
        <taxon>Pseudomonadaceae</taxon>
        <taxon>Pseudomonas</taxon>
    </lineage>
</organism>
<dbReference type="EC" id="1.14.12.12" evidence="1"/>
<dbReference type="EMBL" id="AF004283">
    <property type="protein sequence ID" value="AAB61370.1"/>
    <property type="molecule type" value="Genomic_DNA"/>
</dbReference>
<dbReference type="UniPathway" id="UPA00082"/>
<dbReference type="GO" id="GO:0051537">
    <property type="term" value="F:2 iron, 2 sulfur cluster binding"/>
    <property type="evidence" value="ECO:0000250"/>
    <property type="project" value="UniProtKB"/>
</dbReference>
<dbReference type="GO" id="GO:0005506">
    <property type="term" value="F:iron ion binding"/>
    <property type="evidence" value="ECO:0000250"/>
    <property type="project" value="UniProtKB"/>
</dbReference>
<dbReference type="GO" id="GO:0018625">
    <property type="term" value="F:naphthalene 1,2-dioxygenase activity"/>
    <property type="evidence" value="ECO:0000250"/>
    <property type="project" value="UniProtKB"/>
</dbReference>
<dbReference type="GO" id="GO:0009056">
    <property type="term" value="P:catabolic process"/>
    <property type="evidence" value="ECO:0007669"/>
    <property type="project" value="UniProtKB-KW"/>
</dbReference>
<dbReference type="CDD" id="cd08881">
    <property type="entry name" value="RHO_alpha_C_NDO-like"/>
    <property type="match status" value="1"/>
</dbReference>
<dbReference type="CDD" id="cd03469">
    <property type="entry name" value="Rieske_RO_Alpha_N"/>
    <property type="match status" value="1"/>
</dbReference>
<dbReference type="FunFam" id="2.102.10.10:FF:000004">
    <property type="entry name" value="3-phenylpropionate/cinnamic acid dioxygenase subunit alpha"/>
    <property type="match status" value="1"/>
</dbReference>
<dbReference type="FunFam" id="3.90.380.10:FF:000007">
    <property type="entry name" value="Naphthalene 1,2-dioxygenase system, large oxygenase component"/>
    <property type="match status" value="1"/>
</dbReference>
<dbReference type="Gene3D" id="3.90.380.10">
    <property type="entry name" value="Naphthalene 1,2-dioxygenase Alpha Subunit, Chain A, domain 1"/>
    <property type="match status" value="1"/>
</dbReference>
<dbReference type="Gene3D" id="2.102.10.10">
    <property type="entry name" value="Rieske [2Fe-2S] iron-sulphur domain"/>
    <property type="match status" value="1"/>
</dbReference>
<dbReference type="InterPro" id="IPR043266">
    <property type="entry name" value="RHO_NdoB-like_C"/>
</dbReference>
<dbReference type="InterPro" id="IPR017941">
    <property type="entry name" value="Rieske_2Fe-2S"/>
</dbReference>
<dbReference type="InterPro" id="IPR036922">
    <property type="entry name" value="Rieske_2Fe-2S_sf"/>
</dbReference>
<dbReference type="InterPro" id="IPR015881">
    <property type="entry name" value="Ring-hydroxy_dOase_2Fe2S_BS"/>
</dbReference>
<dbReference type="InterPro" id="IPR015879">
    <property type="entry name" value="Ring_hydroxy_dOase_asu_C_dom"/>
</dbReference>
<dbReference type="InterPro" id="IPR001663">
    <property type="entry name" value="Rng_hydr_dOase-A"/>
</dbReference>
<dbReference type="PANTHER" id="PTHR43756:SF1">
    <property type="entry name" value="3-PHENYLPROPIONATE_CINNAMIC ACID DIOXYGENASE SUBUNIT ALPHA"/>
    <property type="match status" value="1"/>
</dbReference>
<dbReference type="PANTHER" id="PTHR43756">
    <property type="entry name" value="CHOLINE MONOOXYGENASE, CHLOROPLASTIC"/>
    <property type="match status" value="1"/>
</dbReference>
<dbReference type="Pfam" id="PF00355">
    <property type="entry name" value="Rieske"/>
    <property type="match status" value="1"/>
</dbReference>
<dbReference type="Pfam" id="PF00848">
    <property type="entry name" value="Ring_hydroxyl_A"/>
    <property type="match status" value="1"/>
</dbReference>
<dbReference type="PRINTS" id="PR00090">
    <property type="entry name" value="RNGDIOXGNASE"/>
</dbReference>
<dbReference type="SUPFAM" id="SSF55961">
    <property type="entry name" value="Bet v1-like"/>
    <property type="match status" value="1"/>
</dbReference>
<dbReference type="SUPFAM" id="SSF50022">
    <property type="entry name" value="ISP domain"/>
    <property type="match status" value="1"/>
</dbReference>
<dbReference type="PROSITE" id="PS51296">
    <property type="entry name" value="RIESKE"/>
    <property type="match status" value="1"/>
</dbReference>
<dbReference type="PROSITE" id="PS00570">
    <property type="entry name" value="RING_HYDROXYL_ALPHA"/>
    <property type="match status" value="1"/>
</dbReference>